<sequence>MITLTPGHLTLPQLRRIAREPVQLKLDPASFAKIDAGAKAVADIAAKGEPAYGINTGFGRLASTHIPHDQLELLQKNLVLSHAVGVGEPMARSSVRLLLALKLSSLGRGHSGIRREVMDALITLFNADVLPLIPVKGSVGASGDLAPLAHMSAVLLGVGEVFIRGERASALDGLRVAGLAPLTLQAKEGLALLNGTQASTALALDNMFAIEDLYRTALVAGALSVDAAAGSVKPFDARIHELRGHQGQIDAAASYRELLEGSPINQSHRDCDKVQDPYSLRCQPQVMGACLDQMRHAADVLLVEANAVSDNPLIFPDTGEVLSGGNFHAEPVAFAADNLALAAAEIGALAERRIALLIDATLSGLPPFLVKDGGVNSGFMIAHVTAAALASENKTLAHPASVDSLPTSANQEDHVSMATFAARKLADIADNTKHILAIELLAAAQGVDLRAPYHTSPKLAPVMETIRGKVAHYELDHYFAPDIAVIAKLVGERAFAKVAPFSFASEQ</sequence>
<dbReference type="EC" id="4.3.1.3" evidence="1"/>
<dbReference type="EMBL" id="CP000380">
    <property type="protein sequence ID" value="ABF80770.1"/>
    <property type="molecule type" value="Genomic_DNA"/>
</dbReference>
<dbReference type="SMR" id="Q1BHY5"/>
<dbReference type="HOGENOM" id="CLU_014801_4_0_4"/>
<dbReference type="UniPathway" id="UPA00379">
    <property type="reaction ID" value="UER00549"/>
</dbReference>
<dbReference type="GO" id="GO:0005737">
    <property type="term" value="C:cytoplasm"/>
    <property type="evidence" value="ECO:0007669"/>
    <property type="project" value="UniProtKB-SubCell"/>
</dbReference>
<dbReference type="GO" id="GO:0004397">
    <property type="term" value="F:histidine ammonia-lyase activity"/>
    <property type="evidence" value="ECO:0007669"/>
    <property type="project" value="UniProtKB-UniRule"/>
</dbReference>
<dbReference type="GO" id="GO:0019556">
    <property type="term" value="P:L-histidine catabolic process to glutamate and formamide"/>
    <property type="evidence" value="ECO:0007669"/>
    <property type="project" value="UniProtKB-UniPathway"/>
</dbReference>
<dbReference type="GO" id="GO:0019557">
    <property type="term" value="P:L-histidine catabolic process to glutamate and formate"/>
    <property type="evidence" value="ECO:0007669"/>
    <property type="project" value="UniProtKB-UniPathway"/>
</dbReference>
<dbReference type="CDD" id="cd00332">
    <property type="entry name" value="PAL-HAL"/>
    <property type="match status" value="1"/>
</dbReference>
<dbReference type="FunFam" id="1.10.275.10:FF:000005">
    <property type="entry name" value="Histidine ammonia-lyase"/>
    <property type="match status" value="1"/>
</dbReference>
<dbReference type="FunFam" id="1.20.200.10:FF:000003">
    <property type="entry name" value="Histidine ammonia-lyase"/>
    <property type="match status" value="1"/>
</dbReference>
<dbReference type="Gene3D" id="1.20.200.10">
    <property type="entry name" value="Fumarase/aspartase (Central domain)"/>
    <property type="match status" value="1"/>
</dbReference>
<dbReference type="Gene3D" id="1.10.275.10">
    <property type="entry name" value="Fumarase/aspartase (N-terminal domain)"/>
    <property type="match status" value="1"/>
</dbReference>
<dbReference type="HAMAP" id="MF_00229">
    <property type="entry name" value="His_ammonia_lyase"/>
    <property type="match status" value="1"/>
</dbReference>
<dbReference type="InterPro" id="IPR001106">
    <property type="entry name" value="Aromatic_Lyase"/>
</dbReference>
<dbReference type="InterPro" id="IPR024083">
    <property type="entry name" value="Fumarase/histidase_N"/>
</dbReference>
<dbReference type="InterPro" id="IPR005921">
    <property type="entry name" value="HutH"/>
</dbReference>
<dbReference type="InterPro" id="IPR008948">
    <property type="entry name" value="L-Aspartase-like"/>
</dbReference>
<dbReference type="InterPro" id="IPR022313">
    <property type="entry name" value="Phe/His_NH3-lyase_AS"/>
</dbReference>
<dbReference type="NCBIfam" id="TIGR01225">
    <property type="entry name" value="hutH"/>
    <property type="match status" value="1"/>
</dbReference>
<dbReference type="NCBIfam" id="NF006871">
    <property type="entry name" value="PRK09367.1"/>
    <property type="match status" value="1"/>
</dbReference>
<dbReference type="PANTHER" id="PTHR10362">
    <property type="entry name" value="HISTIDINE AMMONIA-LYASE"/>
    <property type="match status" value="1"/>
</dbReference>
<dbReference type="Pfam" id="PF00221">
    <property type="entry name" value="Lyase_aromatic"/>
    <property type="match status" value="1"/>
</dbReference>
<dbReference type="SUPFAM" id="SSF48557">
    <property type="entry name" value="L-aspartase-like"/>
    <property type="match status" value="1"/>
</dbReference>
<dbReference type="PROSITE" id="PS00488">
    <property type="entry name" value="PAL_HISTIDASE"/>
    <property type="match status" value="1"/>
</dbReference>
<accession>Q1BHY5</accession>
<organism>
    <name type="scientific">Burkholderia orbicola (strain AU 1054)</name>
    <dbReference type="NCBI Taxonomy" id="331271"/>
    <lineage>
        <taxon>Bacteria</taxon>
        <taxon>Pseudomonadati</taxon>
        <taxon>Pseudomonadota</taxon>
        <taxon>Betaproteobacteria</taxon>
        <taxon>Burkholderiales</taxon>
        <taxon>Burkholderiaceae</taxon>
        <taxon>Burkholderia</taxon>
        <taxon>Burkholderia cepacia complex</taxon>
        <taxon>Burkholderia orbicola</taxon>
    </lineage>
</organism>
<name>HUTH_BURO1</name>
<feature type="chain" id="PRO_1000021547" description="Histidine ammonia-lyase">
    <location>
        <begin position="1"/>
        <end position="507"/>
    </location>
</feature>
<feature type="modified residue" description="2,3-didehydroalanine (Ser)" evidence="1">
    <location>
        <position position="142"/>
    </location>
</feature>
<feature type="cross-link" description="5-imidazolinone (Ala-Gly)" evidence="1">
    <location>
        <begin position="141"/>
        <end position="143"/>
    </location>
</feature>
<evidence type="ECO:0000255" key="1">
    <source>
        <dbReference type="HAMAP-Rule" id="MF_00229"/>
    </source>
</evidence>
<protein>
    <recommendedName>
        <fullName evidence="1">Histidine ammonia-lyase</fullName>
        <shortName evidence="1">Histidase</shortName>
        <ecNumber evidence="1">4.3.1.3</ecNumber>
    </recommendedName>
</protein>
<gene>
    <name evidence="1" type="primary">hutH</name>
    <name type="ordered locus">Bcen_5905</name>
</gene>
<proteinExistence type="inferred from homology"/>
<comment type="catalytic activity">
    <reaction evidence="1">
        <text>L-histidine = trans-urocanate + NH4(+)</text>
        <dbReference type="Rhea" id="RHEA:21232"/>
        <dbReference type="ChEBI" id="CHEBI:17771"/>
        <dbReference type="ChEBI" id="CHEBI:28938"/>
        <dbReference type="ChEBI" id="CHEBI:57595"/>
        <dbReference type="EC" id="4.3.1.3"/>
    </reaction>
</comment>
<comment type="pathway">
    <text evidence="1">Amino-acid degradation; L-histidine degradation into L-glutamate; N-formimidoyl-L-glutamate from L-histidine: step 1/3.</text>
</comment>
<comment type="subcellular location">
    <subcellularLocation>
        <location evidence="1">Cytoplasm</location>
    </subcellularLocation>
</comment>
<comment type="PTM">
    <text evidence="1">Contains an active site 4-methylidene-imidazol-5-one (MIO), which is formed autocatalytically by cyclization and dehydration of residues Ala-Ser-Gly.</text>
</comment>
<comment type="similarity">
    <text evidence="1">Belongs to the PAL/histidase family.</text>
</comment>
<reference key="1">
    <citation type="submission" date="2006-05" db="EMBL/GenBank/DDBJ databases">
        <title>Complete sequence of chromosome 3 of Burkholderia cenocepacia AU 1054.</title>
        <authorList>
            <consortium name="US DOE Joint Genome Institute"/>
            <person name="Copeland A."/>
            <person name="Lucas S."/>
            <person name="Lapidus A."/>
            <person name="Barry K."/>
            <person name="Detter J.C."/>
            <person name="Glavina del Rio T."/>
            <person name="Hammon N."/>
            <person name="Israni S."/>
            <person name="Dalin E."/>
            <person name="Tice H."/>
            <person name="Pitluck S."/>
            <person name="Chain P."/>
            <person name="Malfatti S."/>
            <person name="Shin M."/>
            <person name="Vergez L."/>
            <person name="Schmutz J."/>
            <person name="Larimer F."/>
            <person name="Land M."/>
            <person name="Hauser L."/>
            <person name="Kyrpides N."/>
            <person name="Lykidis A."/>
            <person name="LiPuma J.J."/>
            <person name="Konstantinidis K."/>
            <person name="Tiedje J.M."/>
            <person name="Richardson P."/>
        </authorList>
    </citation>
    <scope>NUCLEOTIDE SEQUENCE [LARGE SCALE GENOMIC DNA]</scope>
    <source>
        <strain>AU 1054</strain>
    </source>
</reference>
<keyword id="KW-0963">Cytoplasm</keyword>
<keyword id="KW-0369">Histidine metabolism</keyword>
<keyword id="KW-0456">Lyase</keyword>